<organism>
    <name type="scientific">Bordetella bronchiseptica (strain ATCC BAA-588 / NCTC 13252 / RB50)</name>
    <name type="common">Alcaligenes bronchisepticus</name>
    <dbReference type="NCBI Taxonomy" id="257310"/>
    <lineage>
        <taxon>Bacteria</taxon>
        <taxon>Pseudomonadati</taxon>
        <taxon>Pseudomonadota</taxon>
        <taxon>Betaproteobacteria</taxon>
        <taxon>Burkholderiales</taxon>
        <taxon>Alcaligenaceae</taxon>
        <taxon>Bordetella</taxon>
    </lineage>
</organism>
<evidence type="ECO:0000255" key="1">
    <source>
        <dbReference type="HAMAP-Rule" id="MF_00163"/>
    </source>
</evidence>
<feature type="chain" id="PRO_0000082745" description="Peptide deformylase 2">
    <location>
        <begin position="1"/>
        <end position="176"/>
    </location>
</feature>
<feature type="active site" evidence="1">
    <location>
        <position position="142"/>
    </location>
</feature>
<feature type="binding site" evidence="1">
    <location>
        <position position="99"/>
    </location>
    <ligand>
        <name>Fe cation</name>
        <dbReference type="ChEBI" id="CHEBI:24875"/>
    </ligand>
</feature>
<feature type="binding site" evidence="1">
    <location>
        <position position="141"/>
    </location>
    <ligand>
        <name>Fe cation</name>
        <dbReference type="ChEBI" id="CHEBI:24875"/>
    </ligand>
</feature>
<feature type="binding site" evidence="1">
    <location>
        <position position="145"/>
    </location>
    <ligand>
        <name>Fe cation</name>
        <dbReference type="ChEBI" id="CHEBI:24875"/>
    </ligand>
</feature>
<protein>
    <recommendedName>
        <fullName evidence="1">Peptide deformylase 2</fullName>
        <shortName evidence="1">PDF 2</shortName>
        <ecNumber evidence="1">3.5.1.88</ecNumber>
    </recommendedName>
    <alternativeName>
        <fullName evidence="1">Polypeptide deformylase 2</fullName>
    </alternativeName>
</protein>
<sequence length="176" mass="19881">MIHAILKMGDPRLLRVAAPVERYDTPELRALIDDMFETMAHAQGVGLAAPQIGVDLQLVIFGFERNDRYPDAPAVPRTILCNPVIEPLSGEMEDGWEGCLSVPGLRGLVPRYRHIRYSGYDPAGQRIEREAEGFHARVVQHECDHLIGRLYPTRIRDLTKFGYTEVLFPEMDPNAD</sequence>
<proteinExistence type="inferred from homology"/>
<comment type="function">
    <text evidence="1">Removes the formyl group from the N-terminal Met of newly synthesized proteins. Requires at least a dipeptide for an efficient rate of reaction. N-terminal L-methionine is a prerequisite for activity but the enzyme has broad specificity at other positions.</text>
</comment>
<comment type="catalytic activity">
    <reaction evidence="1">
        <text>N-terminal N-formyl-L-methionyl-[peptide] + H2O = N-terminal L-methionyl-[peptide] + formate</text>
        <dbReference type="Rhea" id="RHEA:24420"/>
        <dbReference type="Rhea" id="RHEA-COMP:10639"/>
        <dbReference type="Rhea" id="RHEA-COMP:10640"/>
        <dbReference type="ChEBI" id="CHEBI:15377"/>
        <dbReference type="ChEBI" id="CHEBI:15740"/>
        <dbReference type="ChEBI" id="CHEBI:49298"/>
        <dbReference type="ChEBI" id="CHEBI:64731"/>
        <dbReference type="EC" id="3.5.1.88"/>
    </reaction>
</comment>
<comment type="cofactor">
    <cofactor evidence="1">
        <name>Fe(2+)</name>
        <dbReference type="ChEBI" id="CHEBI:29033"/>
    </cofactor>
    <text evidence="1">Binds 1 Fe(2+) ion.</text>
</comment>
<comment type="similarity">
    <text evidence="1">Belongs to the polypeptide deformylase family.</text>
</comment>
<keyword id="KW-0378">Hydrolase</keyword>
<keyword id="KW-0408">Iron</keyword>
<keyword id="KW-0479">Metal-binding</keyword>
<keyword id="KW-0648">Protein biosynthesis</keyword>
<name>DEF2_BORBR</name>
<gene>
    <name evidence="1" type="primary">def2</name>
    <name type="ordered locus">BB4095</name>
</gene>
<accession>Q7WG25</accession>
<reference key="1">
    <citation type="journal article" date="2003" name="Nat. Genet.">
        <title>Comparative analysis of the genome sequences of Bordetella pertussis, Bordetella parapertussis and Bordetella bronchiseptica.</title>
        <authorList>
            <person name="Parkhill J."/>
            <person name="Sebaihia M."/>
            <person name="Preston A."/>
            <person name="Murphy L.D."/>
            <person name="Thomson N.R."/>
            <person name="Harris D.E."/>
            <person name="Holden M.T.G."/>
            <person name="Churcher C.M."/>
            <person name="Bentley S.D."/>
            <person name="Mungall K.L."/>
            <person name="Cerdeno-Tarraga A.-M."/>
            <person name="Temple L."/>
            <person name="James K.D."/>
            <person name="Harris B."/>
            <person name="Quail M.A."/>
            <person name="Achtman M."/>
            <person name="Atkin R."/>
            <person name="Baker S."/>
            <person name="Basham D."/>
            <person name="Bason N."/>
            <person name="Cherevach I."/>
            <person name="Chillingworth T."/>
            <person name="Collins M."/>
            <person name="Cronin A."/>
            <person name="Davis P."/>
            <person name="Doggett J."/>
            <person name="Feltwell T."/>
            <person name="Goble A."/>
            <person name="Hamlin N."/>
            <person name="Hauser H."/>
            <person name="Holroyd S."/>
            <person name="Jagels K."/>
            <person name="Leather S."/>
            <person name="Moule S."/>
            <person name="Norberczak H."/>
            <person name="O'Neil S."/>
            <person name="Ormond D."/>
            <person name="Price C."/>
            <person name="Rabbinowitsch E."/>
            <person name="Rutter S."/>
            <person name="Sanders M."/>
            <person name="Saunders D."/>
            <person name="Seeger K."/>
            <person name="Sharp S."/>
            <person name="Simmonds M."/>
            <person name="Skelton J."/>
            <person name="Squares R."/>
            <person name="Squares S."/>
            <person name="Stevens K."/>
            <person name="Unwin L."/>
            <person name="Whitehead S."/>
            <person name="Barrell B.G."/>
            <person name="Maskell D.J."/>
        </authorList>
    </citation>
    <scope>NUCLEOTIDE SEQUENCE [LARGE SCALE GENOMIC DNA]</scope>
    <source>
        <strain>ATCC BAA-588 / NCTC 13252 / RB50</strain>
    </source>
</reference>
<dbReference type="EC" id="3.5.1.88" evidence="1"/>
<dbReference type="EMBL" id="BX640449">
    <property type="protein sequence ID" value="CAE34458.1"/>
    <property type="molecule type" value="Genomic_DNA"/>
</dbReference>
<dbReference type="SMR" id="Q7WG25"/>
<dbReference type="KEGG" id="bbr:BB4095"/>
<dbReference type="eggNOG" id="COG0242">
    <property type="taxonomic scope" value="Bacteria"/>
</dbReference>
<dbReference type="HOGENOM" id="CLU_061901_5_2_4"/>
<dbReference type="Proteomes" id="UP000001027">
    <property type="component" value="Chromosome"/>
</dbReference>
<dbReference type="GO" id="GO:0046872">
    <property type="term" value="F:metal ion binding"/>
    <property type="evidence" value="ECO:0007669"/>
    <property type="project" value="UniProtKB-KW"/>
</dbReference>
<dbReference type="GO" id="GO:0042586">
    <property type="term" value="F:peptide deformylase activity"/>
    <property type="evidence" value="ECO:0007669"/>
    <property type="project" value="UniProtKB-UniRule"/>
</dbReference>
<dbReference type="GO" id="GO:0043686">
    <property type="term" value="P:co-translational protein modification"/>
    <property type="evidence" value="ECO:0007669"/>
    <property type="project" value="TreeGrafter"/>
</dbReference>
<dbReference type="GO" id="GO:0006412">
    <property type="term" value="P:translation"/>
    <property type="evidence" value="ECO:0007669"/>
    <property type="project" value="UniProtKB-UniRule"/>
</dbReference>
<dbReference type="CDD" id="cd00487">
    <property type="entry name" value="Pep_deformylase"/>
    <property type="match status" value="1"/>
</dbReference>
<dbReference type="FunFam" id="3.90.45.10:FF:000003">
    <property type="entry name" value="Peptide deformylase"/>
    <property type="match status" value="1"/>
</dbReference>
<dbReference type="Gene3D" id="3.90.45.10">
    <property type="entry name" value="Peptide deformylase"/>
    <property type="match status" value="1"/>
</dbReference>
<dbReference type="HAMAP" id="MF_00163">
    <property type="entry name" value="Pep_deformylase"/>
    <property type="match status" value="1"/>
</dbReference>
<dbReference type="InterPro" id="IPR023635">
    <property type="entry name" value="Peptide_deformylase"/>
</dbReference>
<dbReference type="InterPro" id="IPR036821">
    <property type="entry name" value="Peptide_deformylase_sf"/>
</dbReference>
<dbReference type="NCBIfam" id="TIGR00079">
    <property type="entry name" value="pept_deformyl"/>
    <property type="match status" value="1"/>
</dbReference>
<dbReference type="NCBIfam" id="NF001159">
    <property type="entry name" value="PRK00150.1-3"/>
    <property type="match status" value="1"/>
</dbReference>
<dbReference type="PANTHER" id="PTHR10458">
    <property type="entry name" value="PEPTIDE DEFORMYLASE"/>
    <property type="match status" value="1"/>
</dbReference>
<dbReference type="PANTHER" id="PTHR10458:SF20">
    <property type="entry name" value="PEPTIDE DEFORMYLASE 1"/>
    <property type="match status" value="1"/>
</dbReference>
<dbReference type="Pfam" id="PF01327">
    <property type="entry name" value="Pep_deformylase"/>
    <property type="match status" value="1"/>
</dbReference>
<dbReference type="PIRSF" id="PIRSF004749">
    <property type="entry name" value="Pep_def"/>
    <property type="match status" value="1"/>
</dbReference>
<dbReference type="PRINTS" id="PR01576">
    <property type="entry name" value="PDEFORMYLASE"/>
</dbReference>
<dbReference type="SUPFAM" id="SSF56420">
    <property type="entry name" value="Peptide deformylase"/>
    <property type="match status" value="1"/>
</dbReference>